<comment type="function">
    <text evidence="1 5 9 10">Associates with components of the Mediator and p160 coactivator complexes that play a role as intermediaries transducing regulatory signals from upstream transcriptional activator proteins to basal transcription machinery at the core promoter. Recruited to endogenous nuclear receptor target genes in response to the appropriate hormone. Also functions as a p53 coactivator. May thus play an important role in transcriptional regulation (By similarity). May be involved in apoptosis signaling in the presence of the reinoid CD437. Apoptosis induction involves sequestration of 14-3-3 protein(s) and mediated altered expression of multiple cell cycle regulatory genes including MYC, CCNB1 and CDKN1A. Plays a role in cell cycle progression and/or cell proliferation (PubMed:12816952). In association with CALCOCO1 enhances GATA1- and MED1-mediated transcriptional activation from the gamma-globin promoter during erythroid differentiation of K562 erythroleukemia cells (PubMed:24245781). Can act as a both a coactivator and corepressor of AR-mediated transcription. Contributes to chromatin looping and AR transcription complex assembly by stabilizing AR-GATA2 association on chromatin and facilitating MED1 and RNA polymerase II recruitment to AR-binding sites. May play an important role in the growth and tumorigenesis of prostate cancer cells (PubMed:23887938).</text>
</comment>
<comment type="subunit">
    <text evidence="1 8 9 10">Directly interacts with ESR1, NR3C1 and p53/TP53 (By similarity). Interacts (via N-terminus) with CALCOCO1. Interacts with MED1 (By similarity). Interacts with GATA1. Interacts with AR and GATA2.</text>
</comment>
<comment type="interaction">
    <interactant intactId="EBI-356265">
        <id>Q8IX12</id>
    </interactant>
    <interactant intactId="EBI-10239299">
        <id>Q9NQM4</id>
        <label>DNAAF6</label>
    </interactant>
    <organismsDiffer>false</organismsDiffer>
    <experiments>3</experiments>
</comment>
<comment type="interaction">
    <interactant intactId="EBI-356265">
        <id>Q8IX12</id>
    </interactant>
    <interactant intactId="EBI-618309">
        <id>Q08379</id>
        <label>GOLGA2</label>
    </interactant>
    <organismsDiffer>false</organismsDiffer>
    <experiments>6</experiments>
</comment>
<comment type="interaction">
    <interactant intactId="EBI-356265">
        <id>Q8IX12</id>
    </interactant>
    <interactant intactId="EBI-11522433">
        <id>Q5JR59-3</id>
        <label>MTUS2</label>
    </interactant>
    <organismsDiffer>false</organismsDiffer>
    <experiments>3</experiments>
</comment>
<comment type="interaction">
    <interactant intactId="EBI-356265">
        <id>Q8IX12</id>
    </interactant>
    <interactant intactId="EBI-721525">
        <id>P98175</id>
        <label>RBM10</label>
    </interactant>
    <organismsDiffer>false</organismsDiffer>
    <experiments>2</experiments>
</comment>
<comment type="interaction">
    <interactant intactId="EBI-356265">
        <id>Q8IX12</id>
    </interactant>
    <interactant intactId="EBI-5661333">
        <id>Q969Q1</id>
        <label>TRIM63</label>
    </interactant>
    <organismsDiffer>false</organismsDiffer>
    <experiments>2</experiments>
</comment>
<comment type="interaction">
    <interactant intactId="EBI-356265">
        <id>Q8IX12</id>
    </interactant>
    <interactant intactId="EBI-742339">
        <id>P26368</id>
        <label>U2AF2</label>
    </interactant>
    <organismsDiffer>false</organismsDiffer>
    <experiments>3</experiments>
</comment>
<comment type="interaction">
    <interactant intactId="EBI-356265">
        <id>Q8IX12</id>
    </interactant>
    <interactant intactId="EBI-747743">
        <id>Q9GZV5</id>
        <label>WWTR1</label>
    </interactant>
    <organismsDiffer>false</organismsDiffer>
    <experiments>2</experiments>
</comment>
<comment type="interaction">
    <interactant intactId="EBI-356265">
        <id>Q8IX12</id>
    </interactant>
    <interactant intactId="EBI-1211920">
        <id>Q9EPK5</id>
        <label>Wwtr1</label>
    </interactant>
    <organismsDiffer>true</organismsDiffer>
    <experiments>5</experiments>
</comment>
<comment type="subcellular location">
    <subcellularLocation>
        <location evidence="5">Cytoplasm</location>
        <location evidence="5">Perinuclear region</location>
    </subcellularLocation>
</comment>
<comment type="alternative products">
    <event type="alternative splicing"/>
    <isoform>
        <id>Q8IX12-1</id>
        <name>1</name>
        <sequence type="displayed"/>
    </isoform>
    <isoform>
        <id>Q8IX12-2</id>
        <name>2</name>
        <sequence type="described" ref="VSP_037736"/>
    </isoform>
</comment>
<comment type="tissue specificity">
    <text evidence="5">Expressed in various epithelial cancer cell lines, including breast, colon, prostate, pancreatic and leukemia. Expression is regulated by growth factors.</text>
</comment>
<comment type="sequence caution" evidence="12">
    <conflict type="miscellaneous discrepancy">
        <sequence resource="EMBL-CDS" id="AAH26036"/>
    </conflict>
    <text>Contaminating sequence. Potential poly-A sequence.</text>
</comment>
<comment type="sequence caution" evidence="12">
    <conflict type="miscellaneous discrepancy">
        <sequence resource="EMBL-CDS" id="AAI08683"/>
    </conflict>
    <text>Contaminating sequence. Potential poly-A sequence.</text>
</comment>
<comment type="sequence caution" evidence="12">
    <conflict type="erroneous initiation">
        <sequence resource="EMBL-CDS" id="BAA91354"/>
    </conflict>
</comment>
<name>CCAR1_HUMAN</name>
<gene>
    <name type="primary">CCAR1</name>
    <name type="synonym">CARP1</name>
    <name type="synonym">DIS</name>
</gene>
<evidence type="ECO:0000250" key="1">
    <source>
        <dbReference type="UniProtKB" id="Q8CH18"/>
    </source>
</evidence>
<evidence type="ECO:0000255" key="2"/>
<evidence type="ECO:0000255" key="3">
    <source>
        <dbReference type="PROSITE-ProRule" id="PRU00186"/>
    </source>
</evidence>
<evidence type="ECO:0000256" key="4">
    <source>
        <dbReference type="SAM" id="MobiDB-lite"/>
    </source>
</evidence>
<evidence type="ECO:0000269" key="5">
    <source>
    </source>
</evidence>
<evidence type="ECO:0000269" key="6">
    <source>
    </source>
</evidence>
<evidence type="ECO:0000269" key="7">
    <source>
    </source>
</evidence>
<evidence type="ECO:0000269" key="8">
    <source>
    </source>
</evidence>
<evidence type="ECO:0000269" key="9">
    <source>
    </source>
</evidence>
<evidence type="ECO:0000269" key="10">
    <source>
    </source>
</evidence>
<evidence type="ECO:0000303" key="11">
    <source>
    </source>
</evidence>
<evidence type="ECO:0000305" key="12"/>
<evidence type="ECO:0007744" key="13">
    <source>
    </source>
</evidence>
<evidence type="ECO:0007744" key="14">
    <source>
    </source>
</evidence>
<evidence type="ECO:0007744" key="15">
    <source>
    </source>
</evidence>
<evidence type="ECO:0007744" key="16">
    <source>
    </source>
</evidence>
<evidence type="ECO:0007744" key="17">
    <source>
    </source>
</evidence>
<evidence type="ECO:0007744" key="18">
    <source>
    </source>
</evidence>
<evidence type="ECO:0007744" key="19">
    <source>
    </source>
</evidence>
<evidence type="ECO:0007744" key="20">
    <source>
    </source>
</evidence>
<evidence type="ECO:0007744" key="21">
    <source>
    </source>
</evidence>
<proteinExistence type="evidence at protein level"/>
<reference key="1">
    <citation type="journal article" date="2003" name="J. Biol. Chem.">
        <title>Identification and characterization of a cell cycle and apoptosis regulatory protein-1 as a novel mediator of apoptosis signaling by retinoid CD437.</title>
        <authorList>
            <person name="Rishi A.K."/>
            <person name="Zhang L."/>
            <person name="Boyanapalli M."/>
            <person name="Wali A."/>
            <person name="Mohammad R.M."/>
            <person name="Yu Y."/>
            <person name="Fontana J.A."/>
            <person name="Hatfield J.S."/>
            <person name="Dawson M.I."/>
            <person name="Majumdar A.P.N."/>
            <person name="Reichert U."/>
        </authorList>
    </citation>
    <scope>NUCLEOTIDE SEQUENCE [MRNA] (ISOFORM 1)</scope>
    <scope>FUNCTION</scope>
    <scope>TISSUE SPECIFICITY</scope>
    <scope>SUBCELLULAR LOCATION</scope>
</reference>
<reference key="2">
    <citation type="submission" date="2002-01" db="EMBL/GenBank/DDBJ databases">
        <title>TAZ binding partners identified by mass spectrometry.</title>
        <authorList>
            <person name="Tian Y."/>
            <person name="Li D."/>
            <person name="Benjamin T."/>
        </authorList>
    </citation>
    <scope>NUCLEOTIDE SEQUENCE [MRNA] (ISOFORM 1)</scope>
</reference>
<reference key="3">
    <citation type="journal article" date="2004" name="Nat. Genet.">
        <title>Complete sequencing and characterization of 21,243 full-length human cDNAs.</title>
        <authorList>
            <person name="Ota T."/>
            <person name="Suzuki Y."/>
            <person name="Nishikawa T."/>
            <person name="Otsuki T."/>
            <person name="Sugiyama T."/>
            <person name="Irie R."/>
            <person name="Wakamatsu A."/>
            <person name="Hayashi K."/>
            <person name="Sato H."/>
            <person name="Nagai K."/>
            <person name="Kimura K."/>
            <person name="Makita H."/>
            <person name="Sekine M."/>
            <person name="Obayashi M."/>
            <person name="Nishi T."/>
            <person name="Shibahara T."/>
            <person name="Tanaka T."/>
            <person name="Ishii S."/>
            <person name="Yamamoto J."/>
            <person name="Saito K."/>
            <person name="Kawai Y."/>
            <person name="Isono Y."/>
            <person name="Nakamura Y."/>
            <person name="Nagahari K."/>
            <person name="Murakami K."/>
            <person name="Yasuda T."/>
            <person name="Iwayanagi T."/>
            <person name="Wagatsuma M."/>
            <person name="Shiratori A."/>
            <person name="Sudo H."/>
            <person name="Hosoiri T."/>
            <person name="Kaku Y."/>
            <person name="Kodaira H."/>
            <person name="Kondo H."/>
            <person name="Sugawara M."/>
            <person name="Takahashi M."/>
            <person name="Kanda K."/>
            <person name="Yokoi T."/>
            <person name="Furuya T."/>
            <person name="Kikkawa E."/>
            <person name="Omura Y."/>
            <person name="Abe K."/>
            <person name="Kamihara K."/>
            <person name="Katsuta N."/>
            <person name="Sato K."/>
            <person name="Tanikawa M."/>
            <person name="Yamazaki M."/>
            <person name="Ninomiya K."/>
            <person name="Ishibashi T."/>
            <person name="Yamashita H."/>
            <person name="Murakawa K."/>
            <person name="Fujimori K."/>
            <person name="Tanai H."/>
            <person name="Kimata M."/>
            <person name="Watanabe M."/>
            <person name="Hiraoka S."/>
            <person name="Chiba Y."/>
            <person name="Ishida S."/>
            <person name="Ono Y."/>
            <person name="Takiguchi S."/>
            <person name="Watanabe S."/>
            <person name="Yosida M."/>
            <person name="Hotuta T."/>
            <person name="Kusano J."/>
            <person name="Kanehori K."/>
            <person name="Takahashi-Fujii A."/>
            <person name="Hara H."/>
            <person name="Tanase T.-O."/>
            <person name="Nomura Y."/>
            <person name="Togiya S."/>
            <person name="Komai F."/>
            <person name="Hara R."/>
            <person name="Takeuchi K."/>
            <person name="Arita M."/>
            <person name="Imose N."/>
            <person name="Musashino K."/>
            <person name="Yuuki H."/>
            <person name="Oshima A."/>
            <person name="Sasaki N."/>
            <person name="Aotsuka S."/>
            <person name="Yoshikawa Y."/>
            <person name="Matsunawa H."/>
            <person name="Ichihara T."/>
            <person name="Shiohata N."/>
            <person name="Sano S."/>
            <person name="Moriya S."/>
            <person name="Momiyama H."/>
            <person name="Satoh N."/>
            <person name="Takami S."/>
            <person name="Terashima Y."/>
            <person name="Suzuki O."/>
            <person name="Nakagawa S."/>
            <person name="Senoh A."/>
            <person name="Mizoguchi H."/>
            <person name="Goto Y."/>
            <person name="Shimizu F."/>
            <person name="Wakebe H."/>
            <person name="Hishigaki H."/>
            <person name="Watanabe T."/>
            <person name="Sugiyama A."/>
            <person name="Takemoto M."/>
            <person name="Kawakami B."/>
            <person name="Yamazaki M."/>
            <person name="Watanabe K."/>
            <person name="Kumagai A."/>
            <person name="Itakura S."/>
            <person name="Fukuzumi Y."/>
            <person name="Fujimori Y."/>
            <person name="Komiyama M."/>
            <person name="Tashiro H."/>
            <person name="Tanigami A."/>
            <person name="Fujiwara T."/>
            <person name="Ono T."/>
            <person name="Yamada K."/>
            <person name="Fujii Y."/>
            <person name="Ozaki K."/>
            <person name="Hirao M."/>
            <person name="Ohmori Y."/>
            <person name="Kawabata A."/>
            <person name="Hikiji T."/>
            <person name="Kobatake N."/>
            <person name="Inagaki H."/>
            <person name="Ikema Y."/>
            <person name="Okamoto S."/>
            <person name="Okitani R."/>
            <person name="Kawakami T."/>
            <person name="Noguchi S."/>
            <person name="Itoh T."/>
            <person name="Shigeta K."/>
            <person name="Senba T."/>
            <person name="Matsumura K."/>
            <person name="Nakajima Y."/>
            <person name="Mizuno T."/>
            <person name="Morinaga M."/>
            <person name="Sasaki M."/>
            <person name="Togashi T."/>
            <person name="Oyama M."/>
            <person name="Hata H."/>
            <person name="Watanabe M."/>
            <person name="Komatsu T."/>
            <person name="Mizushima-Sugano J."/>
            <person name="Satoh T."/>
            <person name="Shirai Y."/>
            <person name="Takahashi Y."/>
            <person name="Nakagawa K."/>
            <person name="Okumura K."/>
            <person name="Nagase T."/>
            <person name="Nomura N."/>
            <person name="Kikuchi H."/>
            <person name="Masuho Y."/>
            <person name="Yamashita R."/>
            <person name="Nakai K."/>
            <person name="Yada T."/>
            <person name="Nakamura Y."/>
            <person name="Ohara O."/>
            <person name="Isogai T."/>
            <person name="Sugano S."/>
        </authorList>
    </citation>
    <scope>NUCLEOTIDE SEQUENCE [LARGE SCALE MRNA] (ISOFORM 1)</scope>
    <scope>NUCLEOTIDE SEQUENCE [LARGE SCALE MRNA] OF 1-1058 (ISOFORM 2)</scope>
    <source>
        <tissue>Hepatoma</tissue>
        <tissue>Lung</tissue>
        <tissue>Placenta</tissue>
        <tissue>Teratocarcinoma</tissue>
        <tissue>Thymus</tissue>
    </source>
</reference>
<reference key="4">
    <citation type="journal article" date="2004" name="Nature">
        <title>The DNA sequence and comparative analysis of human chromosome 10.</title>
        <authorList>
            <person name="Deloukas P."/>
            <person name="Earthrowl M.E."/>
            <person name="Grafham D.V."/>
            <person name="Rubenfield M."/>
            <person name="French L."/>
            <person name="Steward C.A."/>
            <person name="Sims S.K."/>
            <person name="Jones M.C."/>
            <person name="Searle S."/>
            <person name="Scott C."/>
            <person name="Howe K."/>
            <person name="Hunt S.E."/>
            <person name="Andrews T.D."/>
            <person name="Gilbert J.G.R."/>
            <person name="Swarbreck D."/>
            <person name="Ashurst J.L."/>
            <person name="Taylor A."/>
            <person name="Battles J."/>
            <person name="Bird C.P."/>
            <person name="Ainscough R."/>
            <person name="Almeida J.P."/>
            <person name="Ashwell R.I.S."/>
            <person name="Ambrose K.D."/>
            <person name="Babbage A.K."/>
            <person name="Bagguley C.L."/>
            <person name="Bailey J."/>
            <person name="Banerjee R."/>
            <person name="Bates K."/>
            <person name="Beasley H."/>
            <person name="Bray-Allen S."/>
            <person name="Brown A.J."/>
            <person name="Brown J.Y."/>
            <person name="Burford D.C."/>
            <person name="Burrill W."/>
            <person name="Burton J."/>
            <person name="Cahill P."/>
            <person name="Camire D."/>
            <person name="Carter N.P."/>
            <person name="Chapman J.C."/>
            <person name="Clark S.Y."/>
            <person name="Clarke G."/>
            <person name="Clee C.M."/>
            <person name="Clegg S."/>
            <person name="Corby N."/>
            <person name="Coulson A."/>
            <person name="Dhami P."/>
            <person name="Dutta I."/>
            <person name="Dunn M."/>
            <person name="Faulkner L."/>
            <person name="Frankish A."/>
            <person name="Frankland J.A."/>
            <person name="Garner P."/>
            <person name="Garnett J."/>
            <person name="Gribble S."/>
            <person name="Griffiths C."/>
            <person name="Grocock R."/>
            <person name="Gustafson E."/>
            <person name="Hammond S."/>
            <person name="Harley J.L."/>
            <person name="Hart E."/>
            <person name="Heath P.D."/>
            <person name="Ho T.P."/>
            <person name="Hopkins B."/>
            <person name="Horne J."/>
            <person name="Howden P.J."/>
            <person name="Huckle E."/>
            <person name="Hynds C."/>
            <person name="Johnson C."/>
            <person name="Johnson D."/>
            <person name="Kana A."/>
            <person name="Kay M."/>
            <person name="Kimberley A.M."/>
            <person name="Kershaw J.K."/>
            <person name="Kokkinaki M."/>
            <person name="Laird G.K."/>
            <person name="Lawlor S."/>
            <person name="Lee H.M."/>
            <person name="Leongamornlert D.A."/>
            <person name="Laird G."/>
            <person name="Lloyd C."/>
            <person name="Lloyd D.M."/>
            <person name="Loveland J."/>
            <person name="Lovell J."/>
            <person name="McLaren S."/>
            <person name="McLay K.E."/>
            <person name="McMurray A."/>
            <person name="Mashreghi-Mohammadi M."/>
            <person name="Matthews L."/>
            <person name="Milne S."/>
            <person name="Nickerson T."/>
            <person name="Nguyen M."/>
            <person name="Overton-Larty E."/>
            <person name="Palmer S.A."/>
            <person name="Pearce A.V."/>
            <person name="Peck A.I."/>
            <person name="Pelan S."/>
            <person name="Phillimore B."/>
            <person name="Porter K."/>
            <person name="Rice C.M."/>
            <person name="Rogosin A."/>
            <person name="Ross M.T."/>
            <person name="Sarafidou T."/>
            <person name="Sehra H.K."/>
            <person name="Shownkeen R."/>
            <person name="Skuce C.D."/>
            <person name="Smith M."/>
            <person name="Standring L."/>
            <person name="Sycamore N."/>
            <person name="Tester J."/>
            <person name="Thorpe A."/>
            <person name="Torcasso W."/>
            <person name="Tracey A."/>
            <person name="Tromans A."/>
            <person name="Tsolas J."/>
            <person name="Wall M."/>
            <person name="Walsh J."/>
            <person name="Wang H."/>
            <person name="Weinstock K."/>
            <person name="West A.P."/>
            <person name="Willey D.L."/>
            <person name="Whitehead S.L."/>
            <person name="Wilming L."/>
            <person name="Wray P.W."/>
            <person name="Young L."/>
            <person name="Chen Y."/>
            <person name="Lovering R.C."/>
            <person name="Moschonas N.K."/>
            <person name="Siebert R."/>
            <person name="Fechtel K."/>
            <person name="Bentley D."/>
            <person name="Durbin R.M."/>
            <person name="Hubbard T."/>
            <person name="Doucette-Stamm L."/>
            <person name="Beck S."/>
            <person name="Smith D.R."/>
            <person name="Rogers J."/>
        </authorList>
    </citation>
    <scope>NUCLEOTIDE SEQUENCE [LARGE SCALE GENOMIC DNA]</scope>
</reference>
<reference key="5">
    <citation type="submission" date="2005-07" db="EMBL/GenBank/DDBJ databases">
        <authorList>
            <person name="Mural R.J."/>
            <person name="Istrail S."/>
            <person name="Sutton G.G."/>
            <person name="Florea L."/>
            <person name="Halpern A.L."/>
            <person name="Mobarry C.M."/>
            <person name="Lippert R."/>
            <person name="Walenz B."/>
            <person name="Shatkay H."/>
            <person name="Dew I."/>
            <person name="Miller J.R."/>
            <person name="Flanigan M.J."/>
            <person name="Edwards N.J."/>
            <person name="Bolanos R."/>
            <person name="Fasulo D."/>
            <person name="Halldorsson B.V."/>
            <person name="Hannenhalli S."/>
            <person name="Turner R."/>
            <person name="Yooseph S."/>
            <person name="Lu F."/>
            <person name="Nusskern D.R."/>
            <person name="Shue B.C."/>
            <person name="Zheng X.H."/>
            <person name="Zhong F."/>
            <person name="Delcher A.L."/>
            <person name="Huson D.H."/>
            <person name="Kravitz S.A."/>
            <person name="Mouchard L."/>
            <person name="Reinert K."/>
            <person name="Remington K.A."/>
            <person name="Clark A.G."/>
            <person name="Waterman M.S."/>
            <person name="Eichler E.E."/>
            <person name="Adams M.D."/>
            <person name="Hunkapiller M.W."/>
            <person name="Myers E.W."/>
            <person name="Venter J.C."/>
        </authorList>
    </citation>
    <scope>NUCLEOTIDE SEQUENCE [LARGE SCALE GENOMIC DNA]</scope>
</reference>
<reference key="6">
    <citation type="journal article" date="2004" name="Genome Res.">
        <title>The status, quality, and expansion of the NIH full-length cDNA project: the Mammalian Gene Collection (MGC).</title>
        <authorList>
            <consortium name="The MGC Project Team"/>
        </authorList>
    </citation>
    <scope>NUCLEOTIDE SEQUENCE [LARGE SCALE MRNA] OF 1-818 (ISOFORM 1)</scope>
    <source>
        <tissue>Cerebellum</tissue>
        <tissue>Lung</tissue>
        <tissue>Lymph</tissue>
        <tissue>Muscle</tissue>
        <tissue>Skin</tissue>
    </source>
</reference>
<reference key="7">
    <citation type="journal article" date="2007" name="Science">
        <title>ATM and ATR substrate analysis reveals extensive protein networks responsive to DNA damage.</title>
        <authorList>
            <person name="Matsuoka S."/>
            <person name="Ballif B.A."/>
            <person name="Smogorzewska A."/>
            <person name="McDonald E.R. III"/>
            <person name="Hurov K.E."/>
            <person name="Luo J."/>
            <person name="Bakalarski C.E."/>
            <person name="Zhao Z."/>
            <person name="Solimini N."/>
            <person name="Lerenthal Y."/>
            <person name="Shiloh Y."/>
            <person name="Gygi S.P."/>
            <person name="Elledge S.J."/>
        </authorList>
    </citation>
    <scope>IDENTIFICATION BY MASS SPECTROMETRY [LARGE SCALE ANALYSIS]</scope>
    <source>
        <tissue>Embryonic kidney</tissue>
    </source>
</reference>
<reference key="8">
    <citation type="journal article" date="2008" name="Mol. Cell">
        <title>CCAR1, a key regulator of mediator complex recruitment to nuclear receptor transcription complexes.</title>
        <authorList>
            <person name="Kim J.H."/>
            <person name="Yang C.K."/>
            <person name="Heo K."/>
            <person name="Roeder R.G."/>
            <person name="An W."/>
            <person name="Stallcup M.R."/>
        </authorList>
    </citation>
    <scope>INTERACTION WITH CALCOCO1</scope>
</reference>
<reference key="9">
    <citation type="journal article" date="2008" name="Proteomics">
        <title>Proteomic analysis of ubiquitinated proteins in normal hepatocyte cell line Chang liver cells.</title>
        <authorList>
            <person name="Tan F."/>
            <person name="Lu L."/>
            <person name="Cai Y."/>
            <person name="Wang J."/>
            <person name="Xie Y."/>
            <person name="Wang L."/>
            <person name="Gong Y."/>
            <person name="Xu B.-E."/>
            <person name="Wu J."/>
            <person name="Luo Y."/>
            <person name="Qiang B."/>
            <person name="Yuan J."/>
            <person name="Sun X."/>
            <person name="Peng X."/>
        </authorList>
    </citation>
    <scope>UBIQUITINATION [LARGE SCALE ANALYSIS] AT LYS-637</scope>
    <scope>IDENTIFICATION BY MASS SPECTROMETRY</scope>
    <source>
        <tissue>Liver</tissue>
    </source>
</reference>
<reference key="10">
    <citation type="journal article" date="2010" name="Sci. Signal.">
        <title>Quantitative phosphoproteomics reveals widespread full phosphorylation site occupancy during mitosis.</title>
        <authorList>
            <person name="Olsen J.V."/>
            <person name="Vermeulen M."/>
            <person name="Santamaria A."/>
            <person name="Kumar C."/>
            <person name="Miller M.L."/>
            <person name="Jensen L.J."/>
            <person name="Gnad F."/>
            <person name="Cox J."/>
            <person name="Jensen T.S."/>
            <person name="Nigg E.A."/>
            <person name="Brunak S."/>
            <person name="Mann M."/>
        </authorList>
    </citation>
    <scope>PHOSPHORYLATION [LARGE SCALE ANALYSIS] AT SER-685; SER-697 AND THR-861</scope>
    <scope>IDENTIFICATION BY MASS SPECTROMETRY [LARGE SCALE ANALYSIS]</scope>
    <source>
        <tissue>Cervix carcinoma</tissue>
    </source>
</reference>
<reference key="11">
    <citation type="journal article" date="2011" name="BMC Syst. Biol.">
        <title>Initial characterization of the human central proteome.</title>
        <authorList>
            <person name="Burkard T.R."/>
            <person name="Planyavsky M."/>
            <person name="Kaupe I."/>
            <person name="Breitwieser F.P."/>
            <person name="Buerckstuemmer T."/>
            <person name="Bennett K.L."/>
            <person name="Superti-Furga G."/>
            <person name="Colinge J."/>
        </authorList>
    </citation>
    <scope>IDENTIFICATION BY MASS SPECTROMETRY [LARGE SCALE ANALYSIS]</scope>
</reference>
<reference key="12">
    <citation type="journal article" date="2011" name="Sci. Signal.">
        <title>System-wide temporal characterization of the proteome and phosphoproteome of human embryonic stem cell differentiation.</title>
        <authorList>
            <person name="Rigbolt K.T."/>
            <person name="Prokhorova T.A."/>
            <person name="Akimov V."/>
            <person name="Henningsen J."/>
            <person name="Johansen P.T."/>
            <person name="Kratchmarova I."/>
            <person name="Kassem M."/>
            <person name="Mann M."/>
            <person name="Olsen J.V."/>
            <person name="Blagoev B."/>
        </authorList>
    </citation>
    <scope>PHOSPHORYLATION [LARGE SCALE ANALYSIS] AT THR-861</scope>
    <scope>IDENTIFICATION BY MASS SPECTROMETRY [LARGE SCALE ANALYSIS]</scope>
</reference>
<reference key="13">
    <citation type="journal article" date="2013" name="J. Proteome Res.">
        <title>Toward a comprehensive characterization of a human cancer cell phosphoproteome.</title>
        <authorList>
            <person name="Zhou H."/>
            <person name="Di Palma S."/>
            <person name="Preisinger C."/>
            <person name="Peng M."/>
            <person name="Polat A.N."/>
            <person name="Heck A.J."/>
            <person name="Mohammed S."/>
        </authorList>
    </citation>
    <scope>PHOSPHORYLATION [LARGE SCALE ANALYSIS] AT SER-456 AND THR-627</scope>
    <scope>IDENTIFICATION BY MASS SPECTROMETRY [LARGE SCALE ANALYSIS]</scope>
    <source>
        <tissue>Cervix carcinoma</tissue>
        <tissue>Erythroleukemia</tissue>
    </source>
</reference>
<reference key="14">
    <citation type="journal article" date="2013" name="Nucleic Acids Res.">
        <title>CCAR1 promotes chromatin loading of androgen receptor (AR) transcription complex by stabilizing the association between AR and GATA2.</title>
        <authorList>
            <person name="Seo W.Y."/>
            <person name="Jeong B.C."/>
            <person name="Yu E.J."/>
            <person name="Kim H.J."/>
            <person name="Kim S.H."/>
            <person name="Lim J.E."/>
            <person name="Kwon G.Y."/>
            <person name="Lee H.M."/>
            <person name="Kim J.H."/>
        </authorList>
    </citation>
    <scope>FUNCTION</scope>
    <scope>INTERACTION WITH AR AND GATA2</scope>
</reference>
<reference key="15">
    <citation type="journal article" date="2014" name="Genes Cells">
        <title>CCAR1/CoCoA pair-mediated recruitment of the Mediator defines a novel pathway for GATA1 function.</title>
        <authorList>
            <person name="Mizuta S."/>
            <person name="Minami T."/>
            <person name="Fujita H."/>
            <person name="Kaminaga C."/>
            <person name="Matsui K."/>
            <person name="Ishino R."/>
            <person name="Fujita A."/>
            <person name="Oda K."/>
            <person name="Kawai A."/>
            <person name="Hasegawa N."/>
            <person name="Urahama N."/>
            <person name="Roeder R.G."/>
            <person name="Ito M."/>
        </authorList>
    </citation>
    <scope>FUNCTION</scope>
    <scope>INTERACTION WITH GATA1</scope>
</reference>
<reference key="16">
    <citation type="journal article" date="2014" name="J. Proteomics">
        <title>An enzyme assisted RP-RPLC approach for in-depth analysis of human liver phosphoproteome.</title>
        <authorList>
            <person name="Bian Y."/>
            <person name="Song C."/>
            <person name="Cheng K."/>
            <person name="Dong M."/>
            <person name="Wang F."/>
            <person name="Huang J."/>
            <person name="Sun D."/>
            <person name="Wang L."/>
            <person name="Ye M."/>
            <person name="Zou H."/>
        </authorList>
    </citation>
    <scope>PHOSPHORYLATION [LARGE SCALE ANALYSIS] AT THR-667</scope>
    <scope>IDENTIFICATION BY MASS SPECTROMETRY [LARGE SCALE ANALYSIS]</scope>
    <source>
        <tissue>Liver</tissue>
    </source>
</reference>
<reference key="17">
    <citation type="journal article" date="2014" name="Nat. Struct. Mol. Biol.">
        <title>Uncovering global SUMOylation signaling networks in a site-specific manner.</title>
        <authorList>
            <person name="Hendriks I.A."/>
            <person name="D'Souza R.C."/>
            <person name="Yang B."/>
            <person name="Verlaan-de Vries M."/>
            <person name="Mann M."/>
            <person name="Vertegaal A.C."/>
        </authorList>
    </citation>
    <scope>SUMOYLATION [LARGE SCALE ANALYSIS] AT LYS-1012 AND LYS-1135</scope>
    <scope>IDENTIFICATION BY MASS SPECTROMETRY [LARGE SCALE ANALYSIS]</scope>
</reference>
<reference key="18">
    <citation type="journal article" date="2014" name="Proc. Natl. Acad. Sci. U.S.A.">
        <title>Mapping of SUMO sites and analysis of SUMOylation changes induced by external stimuli.</title>
        <authorList>
            <person name="Impens F."/>
            <person name="Radoshevich L."/>
            <person name="Cossart P."/>
            <person name="Ribet D."/>
        </authorList>
    </citation>
    <scope>SUMOYLATION [LARGE SCALE ANALYSIS] AT LYS-1012 AND LYS-1067</scope>
    <scope>IDENTIFICATION BY MASS SPECTROMETRY [LARGE SCALE ANALYSIS]</scope>
</reference>
<reference key="19">
    <citation type="journal article" date="2015" name="Cell Rep.">
        <title>SUMO-2 orchestrates chromatin modifiers in response to DNA damage.</title>
        <authorList>
            <person name="Hendriks I.A."/>
            <person name="Treffers L.W."/>
            <person name="Verlaan-de Vries M."/>
            <person name="Olsen J.V."/>
            <person name="Vertegaal A.C."/>
        </authorList>
    </citation>
    <scope>SUMOYLATION [LARGE SCALE ANALYSIS] AT LYS-1012</scope>
    <scope>IDENTIFICATION BY MASS SPECTROMETRY [LARGE SCALE ANALYSIS]</scope>
</reference>
<reference key="20">
    <citation type="journal article" date="2015" name="Mol. Cell. Proteomics">
        <title>System-wide analysis of SUMOylation dynamics in response to replication stress reveals novel small ubiquitin-like modified target proteins and acceptor lysines relevant for genome stability.</title>
        <authorList>
            <person name="Xiao Z."/>
            <person name="Chang J.G."/>
            <person name="Hendriks I.A."/>
            <person name="Sigurdsson J.O."/>
            <person name="Olsen J.V."/>
            <person name="Vertegaal A.C."/>
        </authorList>
    </citation>
    <scope>SUMOYLATION [LARGE SCALE ANALYSIS] AT LYS-1012; LYS-1067 AND LYS-1135</scope>
    <scope>IDENTIFICATION BY MASS SPECTROMETRY [LARGE SCALE ANALYSIS]</scope>
</reference>
<reference key="21">
    <citation type="journal article" date="2015" name="Oncotarget">
        <title>CARP-1/CCAR1: A biphasic regulator of cancer cell growth and apoptosis.</title>
        <authorList>
            <person name="Muthu M."/>
            <person name="Cheriyan V.T."/>
            <person name="Rishi A.K."/>
        </authorList>
    </citation>
    <scope>REVIEW</scope>
</reference>
<reference key="22">
    <citation type="journal article" date="2017" name="Nat. Struct. Mol. Biol.">
        <title>Site-specific mapping of the human SUMO proteome reveals co-modification with phosphorylation.</title>
        <authorList>
            <person name="Hendriks I.A."/>
            <person name="Lyon D."/>
            <person name="Young C."/>
            <person name="Jensen L.J."/>
            <person name="Vertegaal A.C."/>
            <person name="Nielsen M.L."/>
        </authorList>
    </citation>
    <scope>SUMOYLATION [LARGE SCALE ANALYSIS] AT LYS-1012 AND LYS-1067</scope>
    <scope>IDENTIFICATION BY MASS SPECTROMETRY [LARGE SCALE ANALYSIS]</scope>
</reference>
<reference key="23">
    <citation type="journal article" date="2006" name="Science">
        <title>The consensus coding sequences of human breast and colorectal cancers.</title>
        <authorList>
            <person name="Sjoeblom T."/>
            <person name="Jones S."/>
            <person name="Wood L.D."/>
            <person name="Parsons D.W."/>
            <person name="Lin J."/>
            <person name="Barber T.D."/>
            <person name="Mandelker D."/>
            <person name="Leary R.J."/>
            <person name="Ptak J."/>
            <person name="Silliman N."/>
            <person name="Szabo S."/>
            <person name="Buckhaults P."/>
            <person name="Farrell C."/>
            <person name="Meeh P."/>
            <person name="Markowitz S.D."/>
            <person name="Willis J."/>
            <person name="Dawson D."/>
            <person name="Willson J.K.V."/>
            <person name="Gazdar A.F."/>
            <person name="Hartigan J."/>
            <person name="Wu L."/>
            <person name="Liu C."/>
            <person name="Parmigiani G."/>
            <person name="Park B.H."/>
            <person name="Bachman K.E."/>
            <person name="Papadopoulos N."/>
            <person name="Vogelstein B."/>
            <person name="Kinzler K.W."/>
            <person name="Velculescu V.E."/>
        </authorList>
    </citation>
    <scope>VARIANT [LARGE SCALE ANALYSIS] LYS-607</scope>
</reference>
<accession>Q8IX12</accession>
<accession>A0JLT7</accession>
<accession>A1L4P7</accession>
<accession>A8K9D4</accession>
<accession>B4DNP8</accession>
<accession>B4DRK8</accession>
<accession>Q32NE3</accession>
<accession>Q5EBM3</accession>
<accession>Q5VUP6</accession>
<accession>Q6PIZ0</accession>
<accession>Q6X935</accession>
<accession>Q9H8N4</accession>
<accession>Q9NVA7</accession>
<accession>Q9NVQ0</accession>
<accession>Q9NWM6</accession>
<dbReference type="EMBL" id="AY249140">
    <property type="protein sequence ID" value="AAP82002.1"/>
    <property type="molecule type" value="mRNA"/>
</dbReference>
<dbReference type="EMBL" id="AF465616">
    <property type="protein sequence ID" value="AAO17319.1"/>
    <property type="molecule type" value="mRNA"/>
</dbReference>
<dbReference type="EMBL" id="AK000741">
    <property type="protein sequence ID" value="BAA91354.1"/>
    <property type="status" value="ALT_INIT"/>
    <property type="molecule type" value="mRNA"/>
</dbReference>
<dbReference type="EMBL" id="AK001452">
    <property type="protein sequence ID" value="BAA91700.1"/>
    <property type="molecule type" value="mRNA"/>
</dbReference>
<dbReference type="EMBL" id="AK001701">
    <property type="protein sequence ID" value="BAA91847.1"/>
    <property type="molecule type" value="mRNA"/>
</dbReference>
<dbReference type="EMBL" id="AK023438">
    <property type="protein sequence ID" value="BAB14574.1"/>
    <property type="molecule type" value="mRNA"/>
</dbReference>
<dbReference type="EMBL" id="AK298004">
    <property type="protein sequence ID" value="BAG60310.1"/>
    <property type="molecule type" value="mRNA"/>
</dbReference>
<dbReference type="EMBL" id="AK299307">
    <property type="protein sequence ID" value="BAG61320.1"/>
    <property type="molecule type" value="mRNA"/>
</dbReference>
<dbReference type="EMBL" id="AK292649">
    <property type="protein sequence ID" value="BAF85338.1"/>
    <property type="molecule type" value="mRNA"/>
</dbReference>
<dbReference type="EMBL" id="AL513534">
    <property type="status" value="NOT_ANNOTATED_CDS"/>
    <property type="molecule type" value="Genomic_DNA"/>
</dbReference>
<dbReference type="EMBL" id="AL391539">
    <property type="status" value="NOT_ANNOTATED_CDS"/>
    <property type="molecule type" value="Genomic_DNA"/>
</dbReference>
<dbReference type="EMBL" id="CH471083">
    <property type="protein sequence ID" value="EAW54302.1"/>
    <property type="molecule type" value="Genomic_DNA"/>
</dbReference>
<dbReference type="EMBL" id="BC015475">
    <property type="protein sequence ID" value="AAH15475.1"/>
    <property type="molecule type" value="mRNA"/>
</dbReference>
<dbReference type="EMBL" id="BC026036">
    <property type="protein sequence ID" value="AAH26036.1"/>
    <property type="status" value="ALT_SEQ"/>
    <property type="molecule type" value="mRNA"/>
</dbReference>
<dbReference type="EMBL" id="BC089420">
    <property type="protein sequence ID" value="AAH89420.1"/>
    <property type="molecule type" value="mRNA"/>
</dbReference>
<dbReference type="EMBL" id="BC130626">
    <property type="protein sequence ID" value="AAI30627.1"/>
    <property type="molecule type" value="mRNA"/>
</dbReference>
<dbReference type="EMBL" id="BC132725">
    <property type="protein sequence ID" value="AAI32726.1"/>
    <property type="molecule type" value="mRNA"/>
</dbReference>
<dbReference type="EMBL" id="BC108682">
    <property type="protein sequence ID" value="AAI08683.1"/>
    <property type="status" value="ALT_SEQ"/>
    <property type="molecule type" value="mRNA"/>
</dbReference>
<dbReference type="CCDS" id="CCDS60547.1">
    <molecule id="Q8IX12-2"/>
</dbReference>
<dbReference type="CCDS" id="CCDS7282.1">
    <molecule id="Q8IX12-1"/>
</dbReference>
<dbReference type="RefSeq" id="NP_001269888.1">
    <molecule id="Q8IX12-2"/>
    <property type="nucleotide sequence ID" value="NM_001282959.2"/>
</dbReference>
<dbReference type="RefSeq" id="NP_001269889.1">
    <molecule id="Q8IX12-2"/>
    <property type="nucleotide sequence ID" value="NM_001282960.2"/>
</dbReference>
<dbReference type="RefSeq" id="NP_060707.2">
    <molecule id="Q8IX12-1"/>
    <property type="nucleotide sequence ID" value="NM_018237.3"/>
</dbReference>
<dbReference type="SMR" id="Q8IX12"/>
<dbReference type="BioGRID" id="120867">
    <property type="interactions" value="200"/>
</dbReference>
<dbReference type="CORUM" id="Q8IX12"/>
<dbReference type="DIP" id="DIP-27607N"/>
<dbReference type="FunCoup" id="Q8IX12">
    <property type="interactions" value="4535"/>
</dbReference>
<dbReference type="IntAct" id="Q8IX12">
    <property type="interactions" value="105"/>
</dbReference>
<dbReference type="MINT" id="Q8IX12"/>
<dbReference type="STRING" id="9606.ENSP00000265872"/>
<dbReference type="GlyCosmos" id="Q8IX12">
    <property type="glycosylation" value="25 sites, 2 glycans"/>
</dbReference>
<dbReference type="GlyGen" id="Q8IX12">
    <property type="glycosylation" value="30 sites, 1 N-linked glycan (1 site), 2 O-linked glycans (29 sites)"/>
</dbReference>
<dbReference type="iPTMnet" id="Q8IX12"/>
<dbReference type="MetOSite" id="Q8IX12"/>
<dbReference type="PhosphoSitePlus" id="Q8IX12"/>
<dbReference type="SwissPalm" id="Q8IX12"/>
<dbReference type="BioMuta" id="CCAR1"/>
<dbReference type="DMDM" id="94707499"/>
<dbReference type="jPOST" id="Q8IX12"/>
<dbReference type="MassIVE" id="Q8IX12"/>
<dbReference type="PaxDb" id="9606-ENSP00000265872"/>
<dbReference type="PeptideAtlas" id="Q8IX12"/>
<dbReference type="ProteomicsDB" id="70961">
    <molecule id="Q8IX12-1"/>
</dbReference>
<dbReference type="ProteomicsDB" id="70962">
    <molecule id="Q8IX12-2"/>
</dbReference>
<dbReference type="Pumba" id="Q8IX12"/>
<dbReference type="Antibodypedia" id="2118">
    <property type="antibodies" value="216 antibodies from 30 providers"/>
</dbReference>
<dbReference type="DNASU" id="55749"/>
<dbReference type="Ensembl" id="ENST00000265872.11">
    <molecule id="Q8IX12-1"/>
    <property type="protein sequence ID" value="ENSP00000265872.6"/>
    <property type="gene ID" value="ENSG00000060339.14"/>
</dbReference>
<dbReference type="Ensembl" id="ENST00000543719.5">
    <molecule id="Q8IX12-2"/>
    <property type="protein sequence ID" value="ENSP00000445254.1"/>
    <property type="gene ID" value="ENSG00000060339.14"/>
</dbReference>
<dbReference type="GeneID" id="55749"/>
<dbReference type="KEGG" id="hsa:55749"/>
<dbReference type="MANE-Select" id="ENST00000265872.11">
    <property type="protein sequence ID" value="ENSP00000265872.6"/>
    <property type="RefSeq nucleotide sequence ID" value="NM_018237.4"/>
    <property type="RefSeq protein sequence ID" value="NP_060707.2"/>
</dbReference>
<dbReference type="UCSC" id="uc001joo.5">
    <molecule id="Q8IX12-1"/>
    <property type="organism name" value="human"/>
</dbReference>
<dbReference type="AGR" id="HGNC:24236"/>
<dbReference type="CTD" id="55749"/>
<dbReference type="DisGeNET" id="55749"/>
<dbReference type="GeneCards" id="CCAR1"/>
<dbReference type="HGNC" id="HGNC:24236">
    <property type="gene designation" value="CCAR1"/>
</dbReference>
<dbReference type="HPA" id="ENSG00000060339">
    <property type="expression patterns" value="Low tissue specificity"/>
</dbReference>
<dbReference type="MIM" id="612569">
    <property type="type" value="gene"/>
</dbReference>
<dbReference type="neXtProt" id="NX_Q8IX12"/>
<dbReference type="OpenTargets" id="ENSG00000060339"/>
<dbReference type="PharmGKB" id="PA134920227"/>
<dbReference type="VEuPathDB" id="HostDB:ENSG00000060339"/>
<dbReference type="eggNOG" id="KOG4246">
    <property type="taxonomic scope" value="Eukaryota"/>
</dbReference>
<dbReference type="GeneTree" id="ENSGT00530000063672"/>
<dbReference type="InParanoid" id="Q8IX12"/>
<dbReference type="OMA" id="MVEASYN"/>
<dbReference type="OrthoDB" id="21006at2759"/>
<dbReference type="PAN-GO" id="Q8IX12">
    <property type="GO annotations" value="3 GO annotations based on evolutionary models"/>
</dbReference>
<dbReference type="PhylomeDB" id="Q8IX12"/>
<dbReference type="TreeFam" id="TF316387"/>
<dbReference type="PathwayCommons" id="Q8IX12"/>
<dbReference type="Reactome" id="R-HSA-72163">
    <property type="pathway name" value="mRNA Splicing - Major Pathway"/>
</dbReference>
<dbReference type="SignaLink" id="Q8IX12"/>
<dbReference type="BioGRID-ORCS" id="55749">
    <property type="hits" value="536 hits in 1164 CRISPR screens"/>
</dbReference>
<dbReference type="CD-CODE" id="DEE660B4">
    <property type="entry name" value="Stress granule"/>
</dbReference>
<dbReference type="ChiTaRS" id="CCAR1">
    <property type="organism name" value="human"/>
</dbReference>
<dbReference type="GeneWiki" id="CCAR1"/>
<dbReference type="GenomeRNAi" id="55749"/>
<dbReference type="Pharos" id="Q8IX12">
    <property type="development level" value="Tbio"/>
</dbReference>
<dbReference type="PRO" id="PR:Q8IX12"/>
<dbReference type="Proteomes" id="UP000005640">
    <property type="component" value="Chromosome 10"/>
</dbReference>
<dbReference type="RNAct" id="Q8IX12">
    <property type="molecule type" value="protein"/>
</dbReference>
<dbReference type="Bgee" id="ENSG00000060339">
    <property type="expression patterns" value="Expressed in sperm and 187 other cell types or tissues"/>
</dbReference>
<dbReference type="ExpressionAtlas" id="Q8IX12">
    <property type="expression patterns" value="baseline and differential"/>
</dbReference>
<dbReference type="GO" id="GO:0005641">
    <property type="term" value="C:nuclear envelope lumen"/>
    <property type="evidence" value="ECO:0000314"/>
    <property type="project" value="MGI"/>
</dbReference>
<dbReference type="GO" id="GO:0005654">
    <property type="term" value="C:nucleoplasm"/>
    <property type="evidence" value="ECO:0000304"/>
    <property type="project" value="Reactome"/>
</dbReference>
<dbReference type="GO" id="GO:0005634">
    <property type="term" value="C:nucleus"/>
    <property type="evidence" value="ECO:0000318"/>
    <property type="project" value="GO_Central"/>
</dbReference>
<dbReference type="GO" id="GO:0048471">
    <property type="term" value="C:perinuclear region of cytoplasm"/>
    <property type="evidence" value="ECO:0007669"/>
    <property type="project" value="UniProtKB-SubCell"/>
</dbReference>
<dbReference type="GO" id="GO:0003723">
    <property type="term" value="F:RNA binding"/>
    <property type="evidence" value="ECO:0007005"/>
    <property type="project" value="UniProtKB"/>
</dbReference>
<dbReference type="GO" id="GO:0000978">
    <property type="term" value="F:RNA polymerase II cis-regulatory region sequence-specific DNA binding"/>
    <property type="evidence" value="ECO:0000314"/>
    <property type="project" value="UniProtKB"/>
</dbReference>
<dbReference type="GO" id="GO:0003713">
    <property type="term" value="F:transcription coactivator activity"/>
    <property type="evidence" value="ECO:0000314"/>
    <property type="project" value="UniProtKB"/>
</dbReference>
<dbReference type="GO" id="GO:0003714">
    <property type="term" value="F:transcription corepressor activity"/>
    <property type="evidence" value="ECO:0000315"/>
    <property type="project" value="UniProtKB"/>
</dbReference>
<dbReference type="GO" id="GO:0061630">
    <property type="term" value="F:ubiquitin protein ligase activity"/>
    <property type="evidence" value="ECO:0000318"/>
    <property type="project" value="GO_Central"/>
</dbReference>
<dbReference type="GO" id="GO:0006915">
    <property type="term" value="P:apoptotic process"/>
    <property type="evidence" value="ECO:0007669"/>
    <property type="project" value="UniProtKB-KW"/>
</dbReference>
<dbReference type="GO" id="GO:0043065">
    <property type="term" value="P:positive regulation of apoptotic process"/>
    <property type="evidence" value="ECO:0000314"/>
    <property type="project" value="MGI"/>
</dbReference>
<dbReference type="GO" id="GO:0030335">
    <property type="term" value="P:positive regulation of cell migration"/>
    <property type="evidence" value="ECO:0000315"/>
    <property type="project" value="UniProtKB"/>
</dbReference>
<dbReference type="GO" id="GO:0008284">
    <property type="term" value="P:positive regulation of cell population proliferation"/>
    <property type="evidence" value="ECO:0000315"/>
    <property type="project" value="UniProtKB"/>
</dbReference>
<dbReference type="GO" id="GO:0016567">
    <property type="term" value="P:protein ubiquitination"/>
    <property type="evidence" value="ECO:0000318"/>
    <property type="project" value="GO_Central"/>
</dbReference>
<dbReference type="GO" id="GO:0006511">
    <property type="term" value="P:ubiquitin-dependent protein catabolic process"/>
    <property type="evidence" value="ECO:0000318"/>
    <property type="project" value="GO_Central"/>
</dbReference>
<dbReference type="FunFam" id="2.40.50.140:FF:000216">
    <property type="entry name" value="Cell division cycle and apoptosis regulator 1"/>
    <property type="match status" value="1"/>
</dbReference>
<dbReference type="FunFam" id="1.10.720.30:FF:000006">
    <property type="entry name" value="Cell division cycle and apoptosis regulator protein 1"/>
    <property type="match status" value="1"/>
</dbReference>
<dbReference type="Gene3D" id="2.40.50.140">
    <property type="entry name" value="Nucleic acid-binding proteins"/>
    <property type="match status" value="1"/>
</dbReference>
<dbReference type="Gene3D" id="1.10.720.30">
    <property type="entry name" value="SAP domain"/>
    <property type="match status" value="1"/>
</dbReference>
<dbReference type="InterPro" id="IPR045354">
    <property type="entry name" value="BURAN"/>
</dbReference>
<dbReference type="InterPro" id="IPR025224">
    <property type="entry name" value="CCAR1/CCAR2"/>
</dbReference>
<dbReference type="InterPro" id="IPR025954">
    <property type="entry name" value="DBC1/CARP1_inactive_NUDIX_dom"/>
</dbReference>
<dbReference type="InterPro" id="IPR011992">
    <property type="entry name" value="EF-hand-dom_pair"/>
</dbReference>
<dbReference type="InterPro" id="IPR045353">
    <property type="entry name" value="LAIKA"/>
</dbReference>
<dbReference type="InterPro" id="IPR012340">
    <property type="entry name" value="NA-bd_OB-fold"/>
</dbReference>
<dbReference type="InterPro" id="IPR025223">
    <property type="entry name" value="S1-like_RNA-bd_dom"/>
</dbReference>
<dbReference type="InterPro" id="IPR003034">
    <property type="entry name" value="SAP_dom"/>
</dbReference>
<dbReference type="InterPro" id="IPR036361">
    <property type="entry name" value="SAP_dom_sf"/>
</dbReference>
<dbReference type="PANTHER" id="PTHR14304">
    <property type="entry name" value="CELL DIVISION CYCLE AND APOPTOSIS REGULATOR PROTEIN"/>
    <property type="match status" value="1"/>
</dbReference>
<dbReference type="PANTHER" id="PTHR14304:SF14">
    <property type="entry name" value="CELL DIVISION CYCLE AND APOPTOSIS REGULATOR PROTEIN 1"/>
    <property type="match status" value="1"/>
</dbReference>
<dbReference type="Pfam" id="PF19257">
    <property type="entry name" value="BURAN"/>
    <property type="match status" value="1"/>
</dbReference>
<dbReference type="Pfam" id="PF14443">
    <property type="entry name" value="DBC1"/>
    <property type="match status" value="1"/>
</dbReference>
<dbReference type="Pfam" id="PF19256">
    <property type="entry name" value="LAIKA"/>
    <property type="match status" value="1"/>
</dbReference>
<dbReference type="Pfam" id="PF14444">
    <property type="entry name" value="S1-like"/>
    <property type="match status" value="1"/>
</dbReference>
<dbReference type="Pfam" id="PF02037">
    <property type="entry name" value="SAP"/>
    <property type="match status" value="1"/>
</dbReference>
<dbReference type="SMART" id="SM01122">
    <property type="entry name" value="DBC1"/>
    <property type="match status" value="1"/>
</dbReference>
<dbReference type="SMART" id="SM00513">
    <property type="entry name" value="SAP"/>
    <property type="match status" value="1"/>
</dbReference>
<dbReference type="SUPFAM" id="SSF47473">
    <property type="entry name" value="EF-hand"/>
    <property type="match status" value="1"/>
</dbReference>
<dbReference type="SUPFAM" id="SSF50249">
    <property type="entry name" value="Nucleic acid-binding proteins"/>
    <property type="match status" value="1"/>
</dbReference>
<dbReference type="SUPFAM" id="SSF68906">
    <property type="entry name" value="SAP domain"/>
    <property type="match status" value="1"/>
</dbReference>
<dbReference type="PROSITE" id="PS50800">
    <property type="entry name" value="SAP"/>
    <property type="match status" value="1"/>
</dbReference>
<sequence length="1150" mass="132821">MAQFGGQKNPPWATQFTATAVSQPAALGVQQPSLLGASPTIYTQQTALAAAGLTTQTPANYQLTQTAALQQQAAAAAAALQQQYSQPQQALYSVQQQLQQPQQTLLTQPAVALPTSLSLSTPQPTAQITVSYPTPRSSQQQTQPQKQRVFTGVVTKLHDTFGFVDEDVFFQLSAVKGKTPQVGDRVLVEATYNPNMPFKWNAQRIQTLPNQNQSQTQPLLKTPPAVLQPIAPQTTFGVQTQPQPQSLLQAQISAASITPLLQTQPQPLLQQPQQKAGLLQPPVRIVSQPQPARRLDPPSRFSGRNDRGDQVPNRKDDRSRERERERRRSRERSPQRKRSRERSPRRERERSPRRVRRVVPRYTVQFSKFSLDCPSCDMMELRRRYQNLYIPSDFFDAQFTWVDAFPLSRPFQLGNYCNFYVMHREVESLEKNMAILDPPDADHLYSAKVMLMASPSMEDLYHKSCALAEDPQELRDGFQHPARLVKFLVGMKGKDEAMAIGGHWSPSLDGPDPEKDPSVLIKTAIRCCKALTGIDLSVCTQWYRFAEIRYHRPEETHKGRTVPAHVETVVLFFPDVWHCLPTRSEWETLSRGYKQQLVEKLQGERKEADGEQDEEEKDDGEAKEISTPTHWSKLDPKTMKVNDLRKELESRALSSKGLKSQLIARLTKQLKVEEQKEEQKELEKSEKEEDEDDDRKSEDDKEEEERKRQEEIERQRRERRYILPDEPAIIVHPNWAAKSGKFDCSIMSLSVLLDYRLEDNKEHSFEVSLFAELFNEMLQRDFGVRIYKSLLSLPEKEDKKEKDKKSKKDERKDKKEERDDETDEPKPKRRKSGDDKDKKEDRDERKKEDKRKDDSKDDDETEEDNNQDEYDPMEAEEAEDEEDDRDEEEMTKRDDKRDINRYCKERPSKDKEKEKTQMITINRDLLMAFVYFDQSHCGYLLEKDLEEILYTLGLHLSRAQVKKLLNKVVLRESCFYRKLTDTSKDEENHEESESLQEDMLGNRLLLPTPTVKQESKDVEENVGLIVYNGAMVDVGSLLQKLEKSEKVRAEVEQKLQLLEEKTDEDEKTILNLENSNKSLSGELREVKKDLSQLQENLKISENMNLQFENQMNKTIRNLSTVMDEIHTVLKKDNVKNEDKDQKSKENGASV</sequence>
<feature type="chain" id="PRO_0000233148" description="Cell division cycle and apoptosis regulator protein 1">
    <location>
        <begin position="1"/>
        <end position="1150"/>
    </location>
</feature>
<feature type="domain" description="SAP" evidence="3">
    <location>
        <begin position="636"/>
        <end position="670"/>
    </location>
</feature>
<feature type="region of interest" description="Interaction with AR" evidence="9">
    <location>
        <begin position="1"/>
        <end position="249"/>
    </location>
</feature>
<feature type="region of interest" description="Disordered" evidence="4">
    <location>
        <begin position="124"/>
        <end position="146"/>
    </location>
</feature>
<feature type="region of interest" description="Interaction with GATA2" evidence="9">
    <location>
        <begin position="203"/>
        <end position="660"/>
    </location>
</feature>
<feature type="region of interest" description="Disordered" evidence="4">
    <location>
        <begin position="285"/>
        <end position="354"/>
    </location>
</feature>
<feature type="region of interest" description="Disordered" evidence="4">
    <location>
        <begin position="600"/>
        <end position="638"/>
    </location>
</feature>
<feature type="region of interest" description="Interaction with GATA1" evidence="10">
    <location>
        <begin position="643"/>
        <end position="1150"/>
    </location>
</feature>
<feature type="region of interest" description="Disordered" evidence="4">
    <location>
        <begin position="673"/>
        <end position="713"/>
    </location>
</feature>
<feature type="region of interest" description="Disordered" evidence="4">
    <location>
        <begin position="796"/>
        <end position="915"/>
    </location>
</feature>
<feature type="coiled-coil region" evidence="2">
    <location>
        <begin position="594"/>
        <end position="618"/>
    </location>
</feature>
<feature type="coiled-coil region" evidence="2">
    <location>
        <begin position="1033"/>
        <end position="1114"/>
    </location>
</feature>
<feature type="compositionally biased region" description="Low complexity" evidence="4">
    <location>
        <begin position="134"/>
        <end position="146"/>
    </location>
</feature>
<feature type="compositionally biased region" description="Basic and acidic residues" evidence="4">
    <location>
        <begin position="293"/>
        <end position="334"/>
    </location>
</feature>
<feature type="compositionally biased region" description="Basic and acidic residues" evidence="4">
    <location>
        <begin position="341"/>
        <end position="352"/>
    </location>
</feature>
<feature type="compositionally biased region" description="Acidic residues" evidence="4">
    <location>
        <begin position="610"/>
        <end position="621"/>
    </location>
</feature>
<feature type="compositionally biased region" description="Basic and acidic residues" evidence="4">
    <location>
        <begin position="673"/>
        <end position="687"/>
    </location>
</feature>
<feature type="compositionally biased region" description="Basic and acidic residues" evidence="4">
    <location>
        <begin position="694"/>
        <end position="713"/>
    </location>
</feature>
<feature type="compositionally biased region" description="Basic and acidic residues" evidence="4">
    <location>
        <begin position="796"/>
        <end position="817"/>
    </location>
</feature>
<feature type="compositionally biased region" description="Basic and acidic residues" evidence="4">
    <location>
        <begin position="832"/>
        <end position="855"/>
    </location>
</feature>
<feature type="compositionally biased region" description="Acidic residues" evidence="4">
    <location>
        <begin position="856"/>
        <end position="889"/>
    </location>
</feature>
<feature type="compositionally biased region" description="Basic and acidic residues" evidence="4">
    <location>
        <begin position="890"/>
        <end position="915"/>
    </location>
</feature>
<feature type="modified residue" description="Phosphoserine" evidence="15">
    <location>
        <position position="456"/>
    </location>
</feature>
<feature type="modified residue" description="Phosphothreonine" evidence="15">
    <location>
        <position position="627"/>
    </location>
</feature>
<feature type="modified residue" description="Phosphothreonine" evidence="16">
    <location>
        <position position="667"/>
    </location>
</feature>
<feature type="modified residue" description="Phosphoserine" evidence="13">
    <location>
        <position position="685"/>
    </location>
</feature>
<feature type="modified residue" description="Phosphoserine" evidence="13">
    <location>
        <position position="697"/>
    </location>
</feature>
<feature type="modified residue" description="Phosphothreonine" evidence="13 14">
    <location>
        <position position="861"/>
    </location>
</feature>
<feature type="cross-link" description="Glycyl lysine isopeptide (Lys-Gly) (interchain with G-Cter in ubiquitin)" evidence="7">
    <location>
        <position position="637"/>
    </location>
</feature>
<feature type="cross-link" description="Glycyl lysine isopeptide (Lys-Gly) (interchain with G-Cter in SUMO1); alternate" evidence="17">
    <location>
        <position position="1012"/>
    </location>
</feature>
<feature type="cross-link" description="Glycyl lysine isopeptide (Lys-Gly) (interchain with G-Cter in SUMO2); alternate" evidence="17 18 19 20 21">
    <location>
        <position position="1012"/>
    </location>
</feature>
<feature type="cross-link" description="Glycyl lysine isopeptide (Lys-Gly) (interchain with G-Cter in SUMO2)" evidence="17 19 21">
    <location>
        <position position="1067"/>
    </location>
</feature>
<feature type="cross-link" description="Glycyl lysine isopeptide (Lys-Gly) (interchain with G-Cter in SUMO2)" evidence="18 19">
    <location>
        <position position="1135"/>
    </location>
</feature>
<feature type="splice variant" id="VSP_037736" description="In isoform 2." evidence="11">
    <location>
        <begin position="83"/>
        <end position="97"/>
    </location>
</feature>
<feature type="sequence variant" id="VAR_058330" description="In dbSNP:rs1782338.">
    <original>T</original>
    <variation>I</variation>
    <location>
        <position position="588"/>
    </location>
</feature>
<feature type="sequence variant" id="VAR_035497" description="In a colorectal cancer sample; somatic mutation." evidence="6">
    <original>E</original>
    <variation>K</variation>
    <location>
        <position position="607"/>
    </location>
</feature>
<feature type="sequence variant" id="VAR_058331" description="In dbSNP:rs1060145.">
    <original>E</original>
    <variation>G</variation>
    <location>
        <position position="681"/>
    </location>
</feature>
<feature type="sequence variant" id="VAR_058332" description="In dbSNP:rs11542602.">
    <original>M</original>
    <variation>V</variation>
    <location>
        <position position="747"/>
    </location>
</feature>
<feature type="sequence conflict" description="In Ref. 3; BAA91354." evidence="12" ref="3">
    <original>D</original>
    <variation>Y</variation>
    <location>
        <position position="296"/>
    </location>
</feature>
<feature type="sequence conflict" description="In Ref. 3; BAG60310." evidence="12" ref="3">
    <original>N</original>
    <variation>S</variation>
    <location>
        <position position="305"/>
    </location>
</feature>
<feature type="sequence conflict" description="In Ref. 3; BAA91847." evidence="12" ref="3">
    <original>K</original>
    <variation>E</variation>
    <location>
        <position position="492"/>
    </location>
</feature>
<feature type="sequence conflict" description="In Ref. 6; AAH15475." evidence="12" ref="6">
    <original>D</original>
    <variation>Y</variation>
    <location>
        <position position="618"/>
    </location>
</feature>
<feature type="sequence conflict" description="In Ref. 2; AAO17319 and 3; BAA91700." evidence="12" ref="2 3">
    <original>S</original>
    <variation>G</variation>
    <location>
        <position position="650"/>
    </location>
</feature>
<feature type="sequence conflict" description="In Ref. 3; BAF85338." evidence="12" ref="3">
    <original>L</original>
    <variation>S</variation>
    <location>
        <position position="723"/>
    </location>
</feature>
<feature type="sequence conflict" description="In Ref. 6; AAH89420." evidence="12" ref="6">
    <original>EKD</original>
    <variation>KKK</variation>
    <location>
        <begin position="801"/>
        <end position="803"/>
    </location>
</feature>
<feature type="sequence conflict" description="In Ref. 6; AAH15475." evidence="12" ref="6">
    <original>EER</original>
    <variation>KKK</variation>
    <location>
        <begin position="816"/>
        <end position="818"/>
    </location>
</feature>
<feature type="sequence conflict" description="In Ref. 1, 2 and 3; BAA91700." evidence="12" ref="1 2 3">
    <original>D</original>
    <variation>G</variation>
    <location>
        <position position="853"/>
    </location>
</feature>
<feature type="sequence conflict" description="In Ref. 1, 2 and 3; BAA91700." evidence="12" ref="1 2 3">
    <original>N</original>
    <variation>S</variation>
    <location>
        <position position="1104"/>
    </location>
</feature>
<organism>
    <name type="scientific">Homo sapiens</name>
    <name type="common">Human</name>
    <dbReference type="NCBI Taxonomy" id="9606"/>
    <lineage>
        <taxon>Eukaryota</taxon>
        <taxon>Metazoa</taxon>
        <taxon>Chordata</taxon>
        <taxon>Craniata</taxon>
        <taxon>Vertebrata</taxon>
        <taxon>Euteleostomi</taxon>
        <taxon>Mammalia</taxon>
        <taxon>Eutheria</taxon>
        <taxon>Euarchontoglires</taxon>
        <taxon>Primates</taxon>
        <taxon>Haplorrhini</taxon>
        <taxon>Catarrhini</taxon>
        <taxon>Hominidae</taxon>
        <taxon>Homo</taxon>
    </lineage>
</organism>
<keyword id="KW-0010">Activator</keyword>
<keyword id="KW-0025">Alternative splicing</keyword>
<keyword id="KW-0053">Apoptosis</keyword>
<keyword id="KW-0131">Cell cycle</keyword>
<keyword id="KW-0175">Coiled coil</keyword>
<keyword id="KW-0963">Cytoplasm</keyword>
<keyword id="KW-1017">Isopeptide bond</keyword>
<keyword id="KW-0597">Phosphoprotein</keyword>
<keyword id="KW-1267">Proteomics identification</keyword>
<keyword id="KW-1185">Reference proteome</keyword>
<keyword id="KW-0678">Repressor</keyword>
<keyword id="KW-0804">Transcription</keyword>
<keyword id="KW-0805">Transcription regulation</keyword>
<keyword id="KW-0832">Ubl conjugation</keyword>
<protein>
    <recommendedName>
        <fullName>Cell division cycle and apoptosis regulator protein 1</fullName>
    </recommendedName>
    <alternativeName>
        <fullName>Cell cycle and apoptosis regulatory protein 1</fullName>
        <shortName>CARP-1</shortName>
    </alternativeName>
    <alternativeName>
        <fullName>Death inducer with SAP domain</fullName>
    </alternativeName>
</protein>